<accession>A9G9T3</accession>
<feature type="chain" id="PRO_0000357933" description="NADH-quinone oxidoreductase subunit D 2">
    <location>
        <begin position="1"/>
        <end position="388"/>
    </location>
</feature>
<protein>
    <recommendedName>
        <fullName evidence="1">NADH-quinone oxidoreductase subunit D 2</fullName>
        <ecNumber evidence="1">7.1.1.-</ecNumber>
    </recommendedName>
    <alternativeName>
        <fullName evidence="1">NADH dehydrogenase I subunit D 2</fullName>
    </alternativeName>
    <alternativeName>
        <fullName evidence="1">NDH-1 subunit D 2</fullName>
    </alternativeName>
</protein>
<name>NUOD2_SORC5</name>
<reference key="1">
    <citation type="journal article" date="2007" name="Nat. Biotechnol.">
        <title>Complete genome sequence of the myxobacterium Sorangium cellulosum.</title>
        <authorList>
            <person name="Schneiker S."/>
            <person name="Perlova O."/>
            <person name="Kaiser O."/>
            <person name="Gerth K."/>
            <person name="Alici A."/>
            <person name="Altmeyer M.O."/>
            <person name="Bartels D."/>
            <person name="Bekel T."/>
            <person name="Beyer S."/>
            <person name="Bode E."/>
            <person name="Bode H.B."/>
            <person name="Bolten C.J."/>
            <person name="Choudhuri J.V."/>
            <person name="Doss S."/>
            <person name="Elnakady Y.A."/>
            <person name="Frank B."/>
            <person name="Gaigalat L."/>
            <person name="Goesmann A."/>
            <person name="Groeger C."/>
            <person name="Gross F."/>
            <person name="Jelsbak L."/>
            <person name="Jelsbak L."/>
            <person name="Kalinowski J."/>
            <person name="Kegler C."/>
            <person name="Knauber T."/>
            <person name="Konietzny S."/>
            <person name="Kopp M."/>
            <person name="Krause L."/>
            <person name="Krug D."/>
            <person name="Linke B."/>
            <person name="Mahmud T."/>
            <person name="Martinez-Arias R."/>
            <person name="McHardy A.C."/>
            <person name="Merai M."/>
            <person name="Meyer F."/>
            <person name="Mormann S."/>
            <person name="Munoz-Dorado J."/>
            <person name="Perez J."/>
            <person name="Pradella S."/>
            <person name="Rachid S."/>
            <person name="Raddatz G."/>
            <person name="Rosenau F."/>
            <person name="Rueckert C."/>
            <person name="Sasse F."/>
            <person name="Scharfe M."/>
            <person name="Schuster S.C."/>
            <person name="Suen G."/>
            <person name="Treuner-Lange A."/>
            <person name="Velicer G.J."/>
            <person name="Vorholter F.-J."/>
            <person name="Weissman K.J."/>
            <person name="Welch R.D."/>
            <person name="Wenzel S.C."/>
            <person name="Whitworth D.E."/>
            <person name="Wilhelm S."/>
            <person name="Wittmann C."/>
            <person name="Bloecker H."/>
            <person name="Puehler A."/>
            <person name="Mueller R."/>
        </authorList>
    </citation>
    <scope>NUCLEOTIDE SEQUENCE [LARGE SCALE GENOMIC DNA]</scope>
    <source>
        <strain>So ce56</strain>
    </source>
</reference>
<dbReference type="EC" id="7.1.1.-" evidence="1"/>
<dbReference type="EMBL" id="AM746676">
    <property type="protein sequence ID" value="CAN99233.1"/>
    <property type="molecule type" value="Genomic_DNA"/>
</dbReference>
<dbReference type="RefSeq" id="WP_012241672.1">
    <property type="nucleotide sequence ID" value="NC_010162.1"/>
</dbReference>
<dbReference type="SMR" id="A9G9T3"/>
<dbReference type="STRING" id="448385.sce9061"/>
<dbReference type="KEGG" id="scl:sce9061"/>
<dbReference type="eggNOG" id="COG0649">
    <property type="taxonomic scope" value="Bacteria"/>
</dbReference>
<dbReference type="HOGENOM" id="CLU_015134_1_2_7"/>
<dbReference type="OrthoDB" id="9801496at2"/>
<dbReference type="BioCyc" id="SCEL448385:SCE_RS46410-MONOMER"/>
<dbReference type="Proteomes" id="UP000002139">
    <property type="component" value="Chromosome"/>
</dbReference>
<dbReference type="GO" id="GO:0005886">
    <property type="term" value="C:plasma membrane"/>
    <property type="evidence" value="ECO:0007669"/>
    <property type="project" value="UniProtKB-SubCell"/>
</dbReference>
<dbReference type="GO" id="GO:0051287">
    <property type="term" value="F:NAD binding"/>
    <property type="evidence" value="ECO:0007669"/>
    <property type="project" value="InterPro"/>
</dbReference>
<dbReference type="GO" id="GO:0050136">
    <property type="term" value="F:NADH:ubiquinone reductase (non-electrogenic) activity"/>
    <property type="evidence" value="ECO:0007669"/>
    <property type="project" value="UniProtKB-UniRule"/>
</dbReference>
<dbReference type="GO" id="GO:0048038">
    <property type="term" value="F:quinone binding"/>
    <property type="evidence" value="ECO:0007669"/>
    <property type="project" value="UniProtKB-KW"/>
</dbReference>
<dbReference type="Gene3D" id="1.10.645.10">
    <property type="entry name" value="Cytochrome-c3 Hydrogenase, chain B"/>
    <property type="match status" value="1"/>
</dbReference>
<dbReference type="HAMAP" id="MF_01358">
    <property type="entry name" value="NDH1_NuoD"/>
    <property type="match status" value="1"/>
</dbReference>
<dbReference type="InterPro" id="IPR001135">
    <property type="entry name" value="NADH_Q_OxRdtase_suD"/>
</dbReference>
<dbReference type="InterPro" id="IPR022885">
    <property type="entry name" value="NDH1_su_D/H"/>
</dbReference>
<dbReference type="InterPro" id="IPR029014">
    <property type="entry name" value="NiFe-Hase_large"/>
</dbReference>
<dbReference type="NCBIfam" id="NF004739">
    <property type="entry name" value="PRK06075.1"/>
    <property type="match status" value="1"/>
</dbReference>
<dbReference type="PANTHER" id="PTHR11993:SF10">
    <property type="entry name" value="NADH DEHYDROGENASE [UBIQUINONE] IRON-SULFUR PROTEIN 2, MITOCHONDRIAL"/>
    <property type="match status" value="1"/>
</dbReference>
<dbReference type="PANTHER" id="PTHR11993">
    <property type="entry name" value="NADH-UBIQUINONE OXIDOREDUCTASE 49 KDA SUBUNIT"/>
    <property type="match status" value="1"/>
</dbReference>
<dbReference type="Pfam" id="PF00346">
    <property type="entry name" value="Complex1_49kDa"/>
    <property type="match status" value="1"/>
</dbReference>
<dbReference type="SUPFAM" id="SSF56762">
    <property type="entry name" value="HydB/Nqo4-like"/>
    <property type="match status" value="1"/>
</dbReference>
<keyword id="KW-0997">Cell inner membrane</keyword>
<keyword id="KW-1003">Cell membrane</keyword>
<keyword id="KW-0472">Membrane</keyword>
<keyword id="KW-0520">NAD</keyword>
<keyword id="KW-0874">Quinone</keyword>
<keyword id="KW-1185">Reference proteome</keyword>
<keyword id="KW-1278">Translocase</keyword>
<keyword id="KW-0813">Transport</keyword>
<keyword id="KW-0830">Ubiquinone</keyword>
<gene>
    <name evidence="1" type="primary">nuoD2</name>
    <name type="ordered locus">sce9061</name>
</gene>
<organism>
    <name type="scientific">Sorangium cellulosum (strain So ce56)</name>
    <name type="common">Polyangium cellulosum (strain So ce56)</name>
    <dbReference type="NCBI Taxonomy" id="448385"/>
    <lineage>
        <taxon>Bacteria</taxon>
        <taxon>Pseudomonadati</taxon>
        <taxon>Myxococcota</taxon>
        <taxon>Polyangia</taxon>
        <taxon>Polyangiales</taxon>
        <taxon>Polyangiaceae</taxon>
        <taxon>Sorangium</taxon>
    </lineage>
</organism>
<sequence>MSQVIFSVDRGGAEPGAEMDDEMTLNMGPHHPSTHGVLRFVISTDGEIIRKAVPDVGYLHRSIEKIGERCTYSGFMPYTDRVDYIAAMFANEAWASACEKLMGIEVPKRAQYLRVISCELNRIGSHMIALGAMAMDVGAVTPFPWALREREYINDFIEELCGARLTFNYHRIGGVSFDMPKGWADKVKHWLDRFEPIMVEFDRLISLNDIFIKRLANVAVVTAEEAKDWGLVGPNLRGSGVKWDLRKEDAYSVYPELEFDVPVGRGRYGTVGDCWDRFYVRVEECRESAKILRQALDKIDEHPEDDILGKLPKKMRPDGEAYARIESARGDMGCYVIGRGAEEAYRARFRTGSFTAMAMIEAKSPGLFLADLVALIASFDVVAPEIDR</sequence>
<evidence type="ECO:0000255" key="1">
    <source>
        <dbReference type="HAMAP-Rule" id="MF_01358"/>
    </source>
</evidence>
<proteinExistence type="inferred from homology"/>
<comment type="function">
    <text evidence="1">NDH-1 shuttles electrons from NADH, via FMN and iron-sulfur (Fe-S) centers, to quinones in the respiratory chain. The immediate electron acceptor for the enzyme in this species is believed to be ubiquinone. Couples the redox reaction to proton translocation (for every two electrons transferred, four hydrogen ions are translocated across the cytoplasmic membrane), and thus conserves the redox energy in a proton gradient.</text>
</comment>
<comment type="catalytic activity">
    <reaction evidence="1">
        <text>a quinone + NADH + 5 H(+)(in) = a quinol + NAD(+) + 4 H(+)(out)</text>
        <dbReference type="Rhea" id="RHEA:57888"/>
        <dbReference type="ChEBI" id="CHEBI:15378"/>
        <dbReference type="ChEBI" id="CHEBI:24646"/>
        <dbReference type="ChEBI" id="CHEBI:57540"/>
        <dbReference type="ChEBI" id="CHEBI:57945"/>
        <dbReference type="ChEBI" id="CHEBI:132124"/>
    </reaction>
</comment>
<comment type="subunit">
    <text evidence="1">NDH-1 is composed of 14 different subunits. Subunits NuoB, C, D, E, F, and G constitute the peripheral sector of the complex.</text>
</comment>
<comment type="subcellular location">
    <subcellularLocation>
        <location evidence="1">Cell inner membrane</location>
        <topology evidence="1">Peripheral membrane protein</topology>
        <orientation evidence="1">Cytoplasmic side</orientation>
    </subcellularLocation>
</comment>
<comment type="similarity">
    <text evidence="1">Belongs to the complex I 49 kDa subunit family.</text>
</comment>